<dbReference type="EC" id="2.1.1.10"/>
<dbReference type="EMBL" id="Z47973">
    <property type="protein sequence ID" value="CAA87995.1"/>
    <property type="molecule type" value="Genomic_DNA"/>
</dbReference>
<dbReference type="EMBL" id="Z73167">
    <property type="protein sequence ID" value="CAA97515.1"/>
    <property type="molecule type" value="Genomic_DNA"/>
</dbReference>
<dbReference type="EMBL" id="AY558194">
    <property type="protein sequence ID" value="AAS56520.1"/>
    <property type="molecule type" value="Genomic_DNA"/>
</dbReference>
<dbReference type="EMBL" id="BK006945">
    <property type="protein sequence ID" value="DAA09263.1"/>
    <property type="molecule type" value="Genomic_DNA"/>
</dbReference>
<dbReference type="PIR" id="S50958">
    <property type="entry name" value="S50958"/>
</dbReference>
<dbReference type="RefSeq" id="NP_013038.1">
    <property type="nucleotide sequence ID" value="NM_001181882.1"/>
</dbReference>
<dbReference type="SMR" id="Q12525"/>
<dbReference type="BioGRID" id="31254">
    <property type="interactions" value="22"/>
</dbReference>
<dbReference type="DIP" id="DIP-1934N"/>
<dbReference type="FunCoup" id="Q12525">
    <property type="interactions" value="263"/>
</dbReference>
<dbReference type="IntAct" id="Q12525">
    <property type="interactions" value="4"/>
</dbReference>
<dbReference type="MINT" id="Q12525"/>
<dbReference type="STRING" id="4932.YLL062C"/>
<dbReference type="iPTMnet" id="Q12525"/>
<dbReference type="PaxDb" id="4932-YLL062C"/>
<dbReference type="PeptideAtlas" id="Q12525"/>
<dbReference type="EnsemblFungi" id="YLL062C_mRNA">
    <property type="protein sequence ID" value="YLL062C"/>
    <property type="gene ID" value="YLL062C"/>
</dbReference>
<dbReference type="GeneID" id="850664"/>
<dbReference type="KEGG" id="sce:YLL062C"/>
<dbReference type="AGR" id="SGD:S000003985"/>
<dbReference type="SGD" id="S000003985">
    <property type="gene designation" value="MHT1"/>
</dbReference>
<dbReference type="VEuPathDB" id="FungiDB:YLL062C"/>
<dbReference type="eggNOG" id="KOG1579">
    <property type="taxonomic scope" value="Eukaryota"/>
</dbReference>
<dbReference type="GeneTree" id="ENSGT00510000049619"/>
<dbReference type="HOGENOM" id="CLU_004914_3_2_1"/>
<dbReference type="InParanoid" id="Q12525"/>
<dbReference type="OMA" id="CSQPEVI"/>
<dbReference type="OrthoDB" id="261426at2759"/>
<dbReference type="BioCyc" id="YEAST:YLL062C-MONOMER"/>
<dbReference type="BioGRID-ORCS" id="850664">
    <property type="hits" value="0 hits in 10 CRISPR screens"/>
</dbReference>
<dbReference type="PRO" id="PR:Q12525"/>
<dbReference type="Proteomes" id="UP000002311">
    <property type="component" value="Chromosome XII"/>
</dbReference>
<dbReference type="RNAct" id="Q12525">
    <property type="molecule type" value="protein"/>
</dbReference>
<dbReference type="GO" id="GO:0005737">
    <property type="term" value="C:cytoplasm"/>
    <property type="evidence" value="ECO:0007005"/>
    <property type="project" value="SGD"/>
</dbReference>
<dbReference type="GO" id="GO:0008898">
    <property type="term" value="F:S-adenosylmethionine-homocysteine S-methyltransferase activity"/>
    <property type="evidence" value="ECO:0000314"/>
    <property type="project" value="SGD"/>
</dbReference>
<dbReference type="GO" id="GO:0061627">
    <property type="term" value="F:S-methylmethionine-homocysteine S-methyltransferase activity"/>
    <property type="evidence" value="ECO:0007669"/>
    <property type="project" value="RHEA"/>
</dbReference>
<dbReference type="GO" id="GO:0008270">
    <property type="term" value="F:zinc ion binding"/>
    <property type="evidence" value="ECO:0007669"/>
    <property type="project" value="InterPro"/>
</dbReference>
<dbReference type="GO" id="GO:0009086">
    <property type="term" value="P:methionine biosynthetic process"/>
    <property type="evidence" value="ECO:0007669"/>
    <property type="project" value="UniProtKB-KW"/>
</dbReference>
<dbReference type="GO" id="GO:0032259">
    <property type="term" value="P:methylation"/>
    <property type="evidence" value="ECO:0007669"/>
    <property type="project" value="UniProtKB-KW"/>
</dbReference>
<dbReference type="GO" id="GO:0000096">
    <property type="term" value="P:sulfur amino acid metabolic process"/>
    <property type="evidence" value="ECO:0000315"/>
    <property type="project" value="SGD"/>
</dbReference>
<dbReference type="FunFam" id="3.20.20.330:FF:000005">
    <property type="entry name" value="AdoMet-homocysteine methyltransferase"/>
    <property type="match status" value="1"/>
</dbReference>
<dbReference type="Gene3D" id="3.20.20.330">
    <property type="entry name" value="Homocysteine-binding-like domain"/>
    <property type="match status" value="1"/>
</dbReference>
<dbReference type="InterPro" id="IPR017226">
    <property type="entry name" value="Betaine-hCys_S-MeTrfase_BHMT"/>
</dbReference>
<dbReference type="InterPro" id="IPR003726">
    <property type="entry name" value="HCY_dom"/>
</dbReference>
<dbReference type="InterPro" id="IPR036589">
    <property type="entry name" value="HCY_dom_sf"/>
</dbReference>
<dbReference type="PANTHER" id="PTHR11103:SF10">
    <property type="entry name" value="HOMOCYSTEINE S-METHYLTRANSFERASE 1-RELATED"/>
    <property type="match status" value="1"/>
</dbReference>
<dbReference type="PANTHER" id="PTHR11103">
    <property type="entry name" value="SLR1189 PROTEIN"/>
    <property type="match status" value="1"/>
</dbReference>
<dbReference type="Pfam" id="PF02574">
    <property type="entry name" value="S-methyl_trans"/>
    <property type="match status" value="1"/>
</dbReference>
<dbReference type="PIRSF" id="PIRSF037505">
    <property type="entry name" value="Betaine_HMT"/>
    <property type="match status" value="1"/>
</dbReference>
<dbReference type="SUPFAM" id="SSF82282">
    <property type="entry name" value="Homocysteine S-methyltransferase"/>
    <property type="match status" value="1"/>
</dbReference>
<dbReference type="PROSITE" id="PS50970">
    <property type="entry name" value="HCY"/>
    <property type="match status" value="1"/>
</dbReference>
<sequence>MKRIPIKELIVEHPGKVLILDGGQGTELENRGININSPVWSAAPFTSESFWEPSSQERKVVEEMYRDFMIAGANILMTITYQANFQSISENTSIKTLAAYKRFLDKIVSFTREFIGEERYLIGSIGPWAAHVSCEYTGDYGPHPENIDYYGFFKPQLENFNQNRDIDLIGFETIPNFHELKAILSWDEDIISKPFYIGLSVDDNSLLRDGTTLEEISVHIKGLGNKINKNLLLMGVNCVSFNQSALILKMLHEHLPGMPLLVYPNSGEIYNPKEKTWHRPTNKLDDWETTVKKFVDNGARIIGGCCRTSPKDIAEIASAVDKYS</sequence>
<proteinExistence type="evidence at protein level"/>
<gene>
    <name type="primary">MHT1</name>
    <name type="ordered locus">YLL062C</name>
    <name type="ORF">L0552</name>
</gene>
<reference key="1">
    <citation type="submission" date="1995-01" db="EMBL/GenBank/DDBJ databases">
        <title>Sequence of a 37 kb DNA fragment from chromosome XII of Saccharomyces cerevisiae including the subtelomeric region of the left arm.</title>
        <authorList>
            <person name="Wedler H."/>
            <person name="Wambutt R."/>
        </authorList>
    </citation>
    <scope>NUCLEOTIDE SEQUENCE [GENOMIC DNA]</scope>
    <source>
        <strain>ATCC 204511 / S288c / AB972</strain>
    </source>
</reference>
<reference key="2">
    <citation type="journal article" date="1997" name="Nature">
        <title>The nucleotide sequence of Saccharomyces cerevisiae chromosome XII.</title>
        <authorList>
            <person name="Johnston M."/>
            <person name="Hillier L.W."/>
            <person name="Riles L."/>
            <person name="Albermann K."/>
            <person name="Andre B."/>
            <person name="Ansorge W."/>
            <person name="Benes V."/>
            <person name="Brueckner M."/>
            <person name="Delius H."/>
            <person name="Dubois E."/>
            <person name="Duesterhoeft A."/>
            <person name="Entian K.-D."/>
            <person name="Floeth M."/>
            <person name="Goffeau A."/>
            <person name="Hebling U."/>
            <person name="Heumann K."/>
            <person name="Heuss-Neitzel D."/>
            <person name="Hilbert H."/>
            <person name="Hilger F."/>
            <person name="Kleine K."/>
            <person name="Koetter P."/>
            <person name="Louis E.J."/>
            <person name="Messenguy F."/>
            <person name="Mewes H.-W."/>
            <person name="Miosga T."/>
            <person name="Moestl D."/>
            <person name="Mueller-Auer S."/>
            <person name="Nentwich U."/>
            <person name="Obermaier B."/>
            <person name="Piravandi E."/>
            <person name="Pohl T.M."/>
            <person name="Portetelle D."/>
            <person name="Purnelle B."/>
            <person name="Rechmann S."/>
            <person name="Rieger M."/>
            <person name="Rinke M."/>
            <person name="Rose M."/>
            <person name="Scharfe M."/>
            <person name="Scherens B."/>
            <person name="Scholler P."/>
            <person name="Schwager C."/>
            <person name="Schwarz S."/>
            <person name="Underwood A.P."/>
            <person name="Urrestarazu L.A."/>
            <person name="Vandenbol M."/>
            <person name="Verhasselt P."/>
            <person name="Vierendeels F."/>
            <person name="Voet M."/>
            <person name="Volckaert G."/>
            <person name="Voss H."/>
            <person name="Wambutt R."/>
            <person name="Wedler E."/>
            <person name="Wedler H."/>
            <person name="Zimmermann F.K."/>
            <person name="Zollner A."/>
            <person name="Hani J."/>
            <person name="Hoheisel J.D."/>
        </authorList>
    </citation>
    <scope>NUCLEOTIDE SEQUENCE [LARGE SCALE GENOMIC DNA]</scope>
    <source>
        <strain>ATCC 204508 / S288c</strain>
    </source>
</reference>
<reference key="3">
    <citation type="journal article" date="2014" name="G3 (Bethesda)">
        <title>The reference genome sequence of Saccharomyces cerevisiae: Then and now.</title>
        <authorList>
            <person name="Engel S.R."/>
            <person name="Dietrich F.S."/>
            <person name="Fisk D.G."/>
            <person name="Binkley G."/>
            <person name="Balakrishnan R."/>
            <person name="Costanzo M.C."/>
            <person name="Dwight S.S."/>
            <person name="Hitz B.C."/>
            <person name="Karra K."/>
            <person name="Nash R.S."/>
            <person name="Weng S."/>
            <person name="Wong E.D."/>
            <person name="Lloyd P."/>
            <person name="Skrzypek M.S."/>
            <person name="Miyasato S.R."/>
            <person name="Simison M."/>
            <person name="Cherry J.M."/>
        </authorList>
    </citation>
    <scope>GENOME REANNOTATION</scope>
    <source>
        <strain>ATCC 204508 / S288c</strain>
    </source>
</reference>
<reference key="4">
    <citation type="journal article" date="2007" name="Genome Res.">
        <title>Approaching a complete repository of sequence-verified protein-encoding clones for Saccharomyces cerevisiae.</title>
        <authorList>
            <person name="Hu Y."/>
            <person name="Rolfs A."/>
            <person name="Bhullar B."/>
            <person name="Murthy T.V.S."/>
            <person name="Zhu C."/>
            <person name="Berger M.F."/>
            <person name="Camargo A.A."/>
            <person name="Kelley F."/>
            <person name="McCarron S."/>
            <person name="Jepson D."/>
            <person name="Richardson A."/>
            <person name="Raphael J."/>
            <person name="Moreira D."/>
            <person name="Taycher E."/>
            <person name="Zuo D."/>
            <person name="Mohr S."/>
            <person name="Kane M.F."/>
            <person name="Williamson J."/>
            <person name="Simpson A.J.G."/>
            <person name="Bulyk M.L."/>
            <person name="Harlow E."/>
            <person name="Marsischky G."/>
            <person name="Kolodner R.D."/>
            <person name="LaBaer J."/>
        </authorList>
    </citation>
    <scope>NUCLEOTIDE SEQUENCE [GENOMIC DNA]</scope>
    <source>
        <strain>ATCC 204508 / S288c</strain>
    </source>
</reference>
<reference key="5">
    <citation type="journal article" date="2000" name="J. Biol. Chem.">
        <title>Reverse methionine biosynthesis from S-adenosylmethionine in eukaryotic cells.</title>
        <authorList>
            <person name="Thomas D."/>
            <person name="Becker A."/>
            <person name="Surdin-Kerjan Y."/>
        </authorList>
    </citation>
    <scope>FUNCTION</scope>
</reference>
<reference key="6">
    <citation type="journal article" date="2003" name="Nature">
        <title>Global analysis of protein localization in budding yeast.</title>
        <authorList>
            <person name="Huh W.-K."/>
            <person name="Falvo J.V."/>
            <person name="Gerke L.C."/>
            <person name="Carroll A.S."/>
            <person name="Howson R.W."/>
            <person name="Weissman J.S."/>
            <person name="O'Shea E.K."/>
        </authorList>
    </citation>
    <scope>SUBCELLULAR LOCATION [LARGE SCALE ANALYSIS]</scope>
</reference>
<reference key="7">
    <citation type="journal article" date="2003" name="Nature">
        <title>Global analysis of protein expression in yeast.</title>
        <authorList>
            <person name="Ghaemmaghami S."/>
            <person name="Huh W.-K."/>
            <person name="Bower K."/>
            <person name="Howson R.W."/>
            <person name="Belle A."/>
            <person name="Dephoure N."/>
            <person name="O'Shea E.K."/>
            <person name="Weissman J.S."/>
        </authorList>
    </citation>
    <scope>LEVEL OF PROTEIN EXPRESSION [LARGE SCALE ANALYSIS]</scope>
</reference>
<protein>
    <recommendedName>
        <fullName>Homocysteine S-methyltransferase 1</fullName>
        <ecNumber>2.1.1.10</ecNumber>
    </recommendedName>
    <alternativeName>
        <fullName>S-methylmethionine:homocysteine methyltransferase 1</fullName>
        <shortName>SMM:Hcy S-methyltransferase 1</shortName>
    </alternativeName>
</protein>
<comment type="function">
    <text evidence="2">Homocysteine S-methyltransferase involved in the conversion of S-adenosylmethionine (AdoMet) to methionine to control the methionine/AdoMet ratio. Also converts S-methylmethionine (SMM) to methionine.</text>
</comment>
<comment type="catalytic activity">
    <reaction>
        <text>S-methyl-L-methionine + L-homocysteine = 2 L-methionine + H(+)</text>
        <dbReference type="Rhea" id="RHEA:26337"/>
        <dbReference type="ChEBI" id="CHEBI:15378"/>
        <dbReference type="ChEBI" id="CHEBI:57844"/>
        <dbReference type="ChEBI" id="CHEBI:58199"/>
        <dbReference type="ChEBI" id="CHEBI:58252"/>
        <dbReference type="EC" id="2.1.1.10"/>
    </reaction>
</comment>
<comment type="cofactor">
    <cofactor evidence="1">
        <name>Zn(2+)</name>
        <dbReference type="ChEBI" id="CHEBI:29105"/>
    </cofactor>
</comment>
<comment type="subcellular location">
    <subcellularLocation>
        <location evidence="3">Cytoplasm</location>
    </subcellularLocation>
</comment>
<comment type="miscellaneous">
    <text evidence="4">Present with 606 molecules/cell in log phase SD medium.</text>
</comment>
<evidence type="ECO:0000255" key="1">
    <source>
        <dbReference type="PROSITE-ProRule" id="PRU00333"/>
    </source>
</evidence>
<evidence type="ECO:0000269" key="2">
    <source>
    </source>
</evidence>
<evidence type="ECO:0000269" key="3">
    <source>
    </source>
</evidence>
<evidence type="ECO:0000269" key="4">
    <source>
    </source>
</evidence>
<organism>
    <name type="scientific">Saccharomyces cerevisiae (strain ATCC 204508 / S288c)</name>
    <name type="common">Baker's yeast</name>
    <dbReference type="NCBI Taxonomy" id="559292"/>
    <lineage>
        <taxon>Eukaryota</taxon>
        <taxon>Fungi</taxon>
        <taxon>Dikarya</taxon>
        <taxon>Ascomycota</taxon>
        <taxon>Saccharomycotina</taxon>
        <taxon>Saccharomycetes</taxon>
        <taxon>Saccharomycetales</taxon>
        <taxon>Saccharomycetaceae</taxon>
        <taxon>Saccharomyces</taxon>
    </lineage>
</organism>
<accession>Q12525</accession>
<accession>D6VXU7</accession>
<keyword id="KW-0028">Amino-acid biosynthesis</keyword>
<keyword id="KW-0963">Cytoplasm</keyword>
<keyword id="KW-0479">Metal-binding</keyword>
<keyword id="KW-0486">Methionine biosynthesis</keyword>
<keyword id="KW-0489">Methyltransferase</keyword>
<keyword id="KW-1185">Reference proteome</keyword>
<keyword id="KW-0949">S-adenosyl-L-methionine</keyword>
<keyword id="KW-0808">Transferase</keyword>
<keyword id="KW-0862">Zinc</keyword>
<feature type="chain" id="PRO_0000114618" description="Homocysteine S-methyltransferase 1">
    <location>
        <begin position="1"/>
        <end position="324"/>
    </location>
</feature>
<feature type="domain" description="Hcy-binding" evidence="1">
    <location>
        <begin position="6"/>
        <end position="320"/>
    </location>
</feature>
<feature type="binding site" evidence="1">
    <location>
        <position position="238"/>
    </location>
    <ligand>
        <name>Zn(2+)</name>
        <dbReference type="ChEBI" id="CHEBI:29105"/>
    </ligand>
</feature>
<feature type="binding site" evidence="1">
    <location>
        <position position="305"/>
    </location>
    <ligand>
        <name>Zn(2+)</name>
        <dbReference type="ChEBI" id="CHEBI:29105"/>
    </ligand>
</feature>
<feature type="binding site" evidence="1">
    <location>
        <position position="306"/>
    </location>
    <ligand>
        <name>Zn(2+)</name>
        <dbReference type="ChEBI" id="CHEBI:29105"/>
    </ligand>
</feature>
<name>MHT1_YEAST</name>